<gene>
    <name evidence="2" type="primary">psaC</name>
    <name type="ordered locus">Synpcc7942_0535</name>
</gene>
<accession>Q31QV2</accession>
<name>PSAC_SYNE7</name>
<keyword id="KW-0002">3D-structure</keyword>
<keyword id="KW-0004">4Fe-4S</keyword>
<keyword id="KW-0249">Electron transport</keyword>
<keyword id="KW-0408">Iron</keyword>
<keyword id="KW-0411">Iron-sulfur</keyword>
<keyword id="KW-0472">Membrane</keyword>
<keyword id="KW-0479">Metal-binding</keyword>
<keyword id="KW-0560">Oxidoreductase</keyword>
<keyword id="KW-0602">Photosynthesis</keyword>
<keyword id="KW-0603">Photosystem I</keyword>
<keyword id="KW-1185">Reference proteome</keyword>
<keyword id="KW-0677">Repeat</keyword>
<keyword id="KW-0793">Thylakoid</keyword>
<keyword id="KW-0813">Transport</keyword>
<evidence type="ECO:0000250" key="1"/>
<evidence type="ECO:0000255" key="2">
    <source>
        <dbReference type="HAMAP-Rule" id="MF_01303"/>
    </source>
</evidence>
<feature type="initiator methionine" description="Removed" evidence="1">
    <location>
        <position position="1"/>
    </location>
</feature>
<feature type="chain" id="PRO_0000292107" description="Photosystem I iron-sulfur center">
    <location>
        <begin position="2"/>
        <end position="81"/>
    </location>
</feature>
<feature type="domain" description="4Fe-4S ferredoxin-type 1" evidence="2">
    <location>
        <begin position="2"/>
        <end position="31"/>
    </location>
</feature>
<feature type="domain" description="4Fe-4S ferredoxin-type 2" evidence="2">
    <location>
        <begin position="39"/>
        <end position="68"/>
    </location>
</feature>
<feature type="binding site" evidence="2">
    <location>
        <position position="11"/>
    </location>
    <ligand>
        <name>[4Fe-4S] cluster</name>
        <dbReference type="ChEBI" id="CHEBI:49883"/>
        <label>1</label>
    </ligand>
</feature>
<feature type="binding site" evidence="2">
    <location>
        <position position="14"/>
    </location>
    <ligand>
        <name>[4Fe-4S] cluster</name>
        <dbReference type="ChEBI" id="CHEBI:49883"/>
        <label>1</label>
    </ligand>
</feature>
<feature type="binding site" evidence="2">
    <location>
        <position position="17"/>
    </location>
    <ligand>
        <name>[4Fe-4S] cluster</name>
        <dbReference type="ChEBI" id="CHEBI:49883"/>
        <label>1</label>
    </ligand>
</feature>
<feature type="binding site" evidence="2">
    <location>
        <position position="21"/>
    </location>
    <ligand>
        <name>[4Fe-4S] cluster</name>
        <dbReference type="ChEBI" id="CHEBI:49883"/>
        <label>2</label>
    </ligand>
</feature>
<feature type="binding site" evidence="2">
    <location>
        <position position="48"/>
    </location>
    <ligand>
        <name>[4Fe-4S] cluster</name>
        <dbReference type="ChEBI" id="CHEBI:49883"/>
        <label>2</label>
    </ligand>
</feature>
<feature type="binding site" evidence="2">
    <location>
        <position position="51"/>
    </location>
    <ligand>
        <name>[4Fe-4S] cluster</name>
        <dbReference type="ChEBI" id="CHEBI:49883"/>
        <label>2</label>
    </ligand>
</feature>
<feature type="binding site" evidence="2">
    <location>
        <position position="54"/>
    </location>
    <ligand>
        <name>[4Fe-4S] cluster</name>
        <dbReference type="ChEBI" id="CHEBI:49883"/>
        <label>2</label>
    </ligand>
</feature>
<feature type="binding site" evidence="2">
    <location>
        <position position="58"/>
    </location>
    <ligand>
        <name>[4Fe-4S] cluster</name>
        <dbReference type="ChEBI" id="CHEBI:49883"/>
        <label>1</label>
    </ligand>
</feature>
<organism>
    <name type="scientific">Synechococcus elongatus (strain ATCC 33912 / PCC 7942 / FACHB-805)</name>
    <name type="common">Anacystis nidulans R2</name>
    <dbReference type="NCBI Taxonomy" id="1140"/>
    <lineage>
        <taxon>Bacteria</taxon>
        <taxon>Bacillati</taxon>
        <taxon>Cyanobacteriota</taxon>
        <taxon>Cyanophyceae</taxon>
        <taxon>Synechococcales</taxon>
        <taxon>Synechococcaceae</taxon>
        <taxon>Synechococcus</taxon>
    </lineage>
</organism>
<comment type="function">
    <text evidence="2">Apoprotein for the two 4Fe-4S centers FA and FB of photosystem I (PSI); essential for photochemical activity. FB is the terminal electron acceptor of PSI, donating electrons to ferredoxin. The C-terminus interacts with PsaA/B/D and helps assemble the protein into the PSI complex. Required for binding of PsaD and PsaE to PSI. PSI is a plastocyanin/cytochrome c6-ferredoxin oxidoreductase, converting photonic excitation into a charge separation, which transfers an electron from the donor P700 chlorophyll pair to the spectroscopically characterized acceptors A0, A1, FX, FA and FB in turn.</text>
</comment>
<comment type="catalytic activity">
    <reaction evidence="2">
        <text>reduced [plastocyanin] + hnu + oxidized [2Fe-2S]-[ferredoxin] = oxidized [plastocyanin] + reduced [2Fe-2S]-[ferredoxin]</text>
        <dbReference type="Rhea" id="RHEA:30407"/>
        <dbReference type="Rhea" id="RHEA-COMP:10000"/>
        <dbReference type="Rhea" id="RHEA-COMP:10001"/>
        <dbReference type="Rhea" id="RHEA-COMP:10039"/>
        <dbReference type="Rhea" id="RHEA-COMP:10040"/>
        <dbReference type="ChEBI" id="CHEBI:29036"/>
        <dbReference type="ChEBI" id="CHEBI:30212"/>
        <dbReference type="ChEBI" id="CHEBI:33737"/>
        <dbReference type="ChEBI" id="CHEBI:33738"/>
        <dbReference type="ChEBI" id="CHEBI:49552"/>
        <dbReference type="EC" id="1.97.1.12"/>
    </reaction>
</comment>
<comment type="cofactor">
    <cofactor evidence="2">
        <name>[4Fe-4S] cluster</name>
        <dbReference type="ChEBI" id="CHEBI:49883"/>
    </cofactor>
    <text evidence="2">Binds 2 [4Fe-4S] clusters. Cluster 2 is most probably the spectroscopically characterized electron acceptor FA and cluster 1 is most probably FB.</text>
</comment>
<comment type="subunit">
    <text evidence="2">The cyanobacterial PSI reaction center is composed of one copy each of PsaA,B,C,D,E,F,I,J,K,L,M and X, and forms trimeric complexes.</text>
</comment>
<comment type="subcellular location">
    <subcellularLocation>
        <location evidence="2">Cellular thylakoid membrane</location>
        <topology evidence="2">Peripheral membrane protein</topology>
        <orientation evidence="2">Cytoplasmic side</orientation>
    </subcellularLocation>
</comment>
<protein>
    <recommendedName>
        <fullName evidence="2">Photosystem I iron-sulfur center</fullName>
        <ecNumber evidence="2">1.97.1.12</ecNumber>
    </recommendedName>
    <alternativeName>
        <fullName evidence="2">9 kDa polypeptide</fullName>
    </alternativeName>
    <alternativeName>
        <fullName evidence="2">PSI-C</fullName>
    </alternativeName>
    <alternativeName>
        <fullName evidence="2">Photosystem I subunit VII</fullName>
    </alternativeName>
    <alternativeName>
        <fullName evidence="2">PsaC</fullName>
    </alternativeName>
</protein>
<proteinExistence type="evidence at protein level"/>
<reference key="1">
    <citation type="submission" date="2005-08" db="EMBL/GenBank/DDBJ databases">
        <title>Complete sequence of chromosome 1 of Synechococcus elongatus PCC 7942.</title>
        <authorList>
            <consortium name="US DOE Joint Genome Institute"/>
            <person name="Copeland A."/>
            <person name="Lucas S."/>
            <person name="Lapidus A."/>
            <person name="Barry K."/>
            <person name="Detter J.C."/>
            <person name="Glavina T."/>
            <person name="Hammon N."/>
            <person name="Israni S."/>
            <person name="Pitluck S."/>
            <person name="Schmutz J."/>
            <person name="Larimer F."/>
            <person name="Land M."/>
            <person name="Kyrpides N."/>
            <person name="Lykidis A."/>
            <person name="Golden S."/>
            <person name="Richardson P."/>
        </authorList>
    </citation>
    <scope>NUCLEOTIDE SEQUENCE [LARGE SCALE GENOMIC DNA]</scope>
    <source>
        <strain>ATCC 33912 / PCC 7942 / FACHB-805</strain>
    </source>
</reference>
<sequence>MSHSVKIYDTCIGCTQCVRACPLDVLEMVPWDGCKAGQIAASPRTEDCVGCKRCETACPTDFLSIRVYLGAETTRSMGLAY</sequence>
<dbReference type="EC" id="1.97.1.12" evidence="2"/>
<dbReference type="EMBL" id="CP000100">
    <property type="protein sequence ID" value="ABB56567.1"/>
    <property type="molecule type" value="Genomic_DNA"/>
</dbReference>
<dbReference type="RefSeq" id="WP_011243298.1">
    <property type="nucleotide sequence ID" value="NZ_JACJTX010000002.1"/>
</dbReference>
<dbReference type="PDB" id="6KIF">
    <property type="method" value="EM"/>
    <property type="resolution" value="3.30 A"/>
    <property type="chains" value="C/N/g=1-81"/>
</dbReference>
<dbReference type="PDB" id="6KIG">
    <property type="method" value="EM"/>
    <property type="resolution" value="2.90 A"/>
    <property type="chains" value="C/N/g=1-81"/>
</dbReference>
<dbReference type="PDBsum" id="6KIF"/>
<dbReference type="PDBsum" id="6KIG"/>
<dbReference type="EMDB" id="EMD-9994"/>
<dbReference type="EMDB" id="EMD-9995"/>
<dbReference type="SMR" id="Q31QV2"/>
<dbReference type="STRING" id="1140.Synpcc7942_0535"/>
<dbReference type="PaxDb" id="1140-Synpcc7942_0535"/>
<dbReference type="GeneID" id="72429358"/>
<dbReference type="KEGG" id="syf:Synpcc7942_0535"/>
<dbReference type="eggNOG" id="COG1143">
    <property type="taxonomic scope" value="Bacteria"/>
</dbReference>
<dbReference type="HOGENOM" id="CLU_139698_8_0_3"/>
<dbReference type="OrthoDB" id="9804603at2"/>
<dbReference type="BioCyc" id="MetaCyc:SYNPCC7942_0535-MONOMER"/>
<dbReference type="BioCyc" id="SYNEL:SYNPCC7942_0535-MONOMER"/>
<dbReference type="Proteomes" id="UP000889800">
    <property type="component" value="Chromosome"/>
</dbReference>
<dbReference type="GO" id="GO:0009522">
    <property type="term" value="C:photosystem I"/>
    <property type="evidence" value="ECO:0007669"/>
    <property type="project" value="UniProtKB-KW"/>
</dbReference>
<dbReference type="GO" id="GO:0031676">
    <property type="term" value="C:plasma membrane-derived thylakoid membrane"/>
    <property type="evidence" value="ECO:0007669"/>
    <property type="project" value="UniProtKB-SubCell"/>
</dbReference>
<dbReference type="GO" id="GO:0051539">
    <property type="term" value="F:4 iron, 4 sulfur cluster binding"/>
    <property type="evidence" value="ECO:0007669"/>
    <property type="project" value="UniProtKB-KW"/>
</dbReference>
<dbReference type="GO" id="GO:0009055">
    <property type="term" value="F:electron transfer activity"/>
    <property type="evidence" value="ECO:0007669"/>
    <property type="project" value="UniProtKB-UniRule"/>
</dbReference>
<dbReference type="GO" id="GO:0046872">
    <property type="term" value="F:metal ion binding"/>
    <property type="evidence" value="ECO:0007669"/>
    <property type="project" value="UniProtKB-KW"/>
</dbReference>
<dbReference type="GO" id="GO:0016491">
    <property type="term" value="F:oxidoreductase activity"/>
    <property type="evidence" value="ECO:0007669"/>
    <property type="project" value="UniProtKB-KW"/>
</dbReference>
<dbReference type="GO" id="GO:0009773">
    <property type="term" value="P:photosynthetic electron transport in photosystem I"/>
    <property type="evidence" value="ECO:0007669"/>
    <property type="project" value="InterPro"/>
</dbReference>
<dbReference type="FunFam" id="3.30.70.20:FF:000001">
    <property type="entry name" value="Photosystem I iron-sulfur center"/>
    <property type="match status" value="1"/>
</dbReference>
<dbReference type="Gene3D" id="3.30.70.20">
    <property type="match status" value="1"/>
</dbReference>
<dbReference type="HAMAP" id="MF_01303">
    <property type="entry name" value="PSI_PsaC"/>
    <property type="match status" value="1"/>
</dbReference>
<dbReference type="InterPro" id="IPR017896">
    <property type="entry name" value="4Fe4S_Fe-S-bd"/>
</dbReference>
<dbReference type="InterPro" id="IPR017900">
    <property type="entry name" value="4Fe4S_Fe_S_CS"/>
</dbReference>
<dbReference type="InterPro" id="IPR050157">
    <property type="entry name" value="PSI_iron-sulfur_center"/>
</dbReference>
<dbReference type="InterPro" id="IPR017491">
    <property type="entry name" value="PSI_PsaC"/>
</dbReference>
<dbReference type="NCBIfam" id="TIGR03048">
    <property type="entry name" value="PS_I_psaC"/>
    <property type="match status" value="1"/>
</dbReference>
<dbReference type="PANTHER" id="PTHR24960:SF79">
    <property type="entry name" value="PHOTOSYSTEM I IRON-SULFUR CENTER"/>
    <property type="match status" value="1"/>
</dbReference>
<dbReference type="PANTHER" id="PTHR24960">
    <property type="entry name" value="PHOTOSYSTEM I IRON-SULFUR CENTER-RELATED"/>
    <property type="match status" value="1"/>
</dbReference>
<dbReference type="Pfam" id="PF12838">
    <property type="entry name" value="Fer4_7"/>
    <property type="match status" value="1"/>
</dbReference>
<dbReference type="SUPFAM" id="SSF54862">
    <property type="entry name" value="4Fe-4S ferredoxins"/>
    <property type="match status" value="1"/>
</dbReference>
<dbReference type="PROSITE" id="PS00198">
    <property type="entry name" value="4FE4S_FER_1"/>
    <property type="match status" value="2"/>
</dbReference>
<dbReference type="PROSITE" id="PS51379">
    <property type="entry name" value="4FE4S_FER_2"/>
    <property type="match status" value="2"/>
</dbReference>